<keyword id="KW-0131">Cell cycle</keyword>
<keyword id="KW-0132">Cell division</keyword>
<keyword id="KW-0159">Chromosome partition</keyword>
<keyword id="KW-0963">Cytoplasm</keyword>
<keyword id="KW-0226">DNA condensation</keyword>
<keyword id="KW-1185">Reference proteome</keyword>
<comment type="function">
    <text evidence="1">Involved in chromosome condensation, segregation and cell cycle progression. May participate in facilitating chromosome segregation by condensation DNA from both sides of a centrally located replisome during cell division. Probably acts via its interaction with MukB and MukF.</text>
</comment>
<comment type="subunit">
    <text evidence="1">Interacts, and probably forms a ternary complex, with MukF and MukB. The complex formation is stimulated by calcium or magnesium.</text>
</comment>
<comment type="subcellular location">
    <subcellularLocation>
        <location evidence="1">Cytoplasm</location>
        <location evidence="1">Nucleoid</location>
    </subcellularLocation>
    <text evidence="1">Restricted to the nucleoid region.</text>
</comment>
<comment type="similarity">
    <text evidence="1">Belongs to the MukE family.</text>
</comment>
<comment type="sequence caution" evidence="3">
    <conflict type="erroneous initiation">
        <sequence resource="EMBL-CDS" id="AAM86318"/>
    </conflict>
</comment>
<dbReference type="EMBL" id="AL590842">
    <property type="protein sequence ID" value="CAL20056.1"/>
    <property type="molecule type" value="Genomic_DNA"/>
</dbReference>
<dbReference type="EMBL" id="AE009952">
    <property type="protein sequence ID" value="AAM86318.1"/>
    <property type="status" value="ALT_INIT"/>
    <property type="molecule type" value="Genomic_DNA"/>
</dbReference>
<dbReference type="EMBL" id="AE017042">
    <property type="protein sequence ID" value="AAS61432.1"/>
    <property type="molecule type" value="Genomic_DNA"/>
</dbReference>
<dbReference type="PIR" id="AF0171">
    <property type="entry name" value="AF0171"/>
</dbReference>
<dbReference type="RefSeq" id="YP_002346427.1">
    <property type="nucleotide sequence ID" value="NC_003143.1"/>
</dbReference>
<dbReference type="SMR" id="Q8D049"/>
<dbReference type="STRING" id="214092.YPO1404"/>
<dbReference type="PaxDb" id="214092-YPO1404"/>
<dbReference type="DNASU" id="1147713"/>
<dbReference type="EnsemblBacteria" id="AAS61432">
    <property type="protein sequence ID" value="AAS61432"/>
    <property type="gene ID" value="YP_1189"/>
</dbReference>
<dbReference type="KEGG" id="ype:YPO1404"/>
<dbReference type="KEGG" id="ypk:y2766"/>
<dbReference type="KEGG" id="ypm:YP_1189"/>
<dbReference type="PATRIC" id="fig|214092.21.peg.1729"/>
<dbReference type="eggNOG" id="COG3095">
    <property type="taxonomic scope" value="Bacteria"/>
</dbReference>
<dbReference type="HOGENOM" id="CLU_1146408_0_0_6"/>
<dbReference type="Proteomes" id="UP000000815">
    <property type="component" value="Chromosome"/>
</dbReference>
<dbReference type="Proteomes" id="UP000001019">
    <property type="component" value="Chromosome"/>
</dbReference>
<dbReference type="Proteomes" id="UP000002490">
    <property type="component" value="Chromosome"/>
</dbReference>
<dbReference type="GO" id="GO:0005737">
    <property type="term" value="C:cytoplasm"/>
    <property type="evidence" value="ECO:0007669"/>
    <property type="project" value="UniProtKB-UniRule"/>
</dbReference>
<dbReference type="GO" id="GO:0009295">
    <property type="term" value="C:nucleoid"/>
    <property type="evidence" value="ECO:0007669"/>
    <property type="project" value="UniProtKB-SubCell"/>
</dbReference>
<dbReference type="GO" id="GO:0051301">
    <property type="term" value="P:cell division"/>
    <property type="evidence" value="ECO:0007669"/>
    <property type="project" value="UniProtKB-KW"/>
</dbReference>
<dbReference type="GO" id="GO:0030261">
    <property type="term" value="P:chromosome condensation"/>
    <property type="evidence" value="ECO:0007669"/>
    <property type="project" value="UniProtKB-KW"/>
</dbReference>
<dbReference type="GO" id="GO:0007059">
    <property type="term" value="P:chromosome segregation"/>
    <property type="evidence" value="ECO:0007669"/>
    <property type="project" value="UniProtKB-UniRule"/>
</dbReference>
<dbReference type="GO" id="GO:0006260">
    <property type="term" value="P:DNA replication"/>
    <property type="evidence" value="ECO:0007669"/>
    <property type="project" value="UniProtKB-UniRule"/>
</dbReference>
<dbReference type="CDD" id="cd16336">
    <property type="entry name" value="MukE"/>
    <property type="match status" value="1"/>
</dbReference>
<dbReference type="Gene3D" id="1.10.10.2250">
    <property type="match status" value="1"/>
</dbReference>
<dbReference type="Gene3D" id="1.10.10.2260">
    <property type="entry name" value="MukE-like family, C-terminal domain"/>
    <property type="match status" value="1"/>
</dbReference>
<dbReference type="HAMAP" id="MF_01802">
    <property type="entry name" value="MukE"/>
    <property type="match status" value="1"/>
</dbReference>
<dbReference type="InterPro" id="IPR042037">
    <property type="entry name" value="MukE_C"/>
</dbReference>
<dbReference type="InterPro" id="IPR042038">
    <property type="entry name" value="MukE_N"/>
</dbReference>
<dbReference type="InterPro" id="IPR007385">
    <property type="entry name" value="Scp_MukE"/>
</dbReference>
<dbReference type="NCBIfam" id="NF003602">
    <property type="entry name" value="PRK05256.1"/>
    <property type="match status" value="1"/>
</dbReference>
<dbReference type="Pfam" id="PF04288">
    <property type="entry name" value="MukE"/>
    <property type="match status" value="1"/>
</dbReference>
<accession>Q8D049</accession>
<accession>Q0WH11</accession>
<accession>Q8ZGA0</accession>
<evidence type="ECO:0000255" key="1">
    <source>
        <dbReference type="HAMAP-Rule" id="MF_01802"/>
    </source>
</evidence>
<evidence type="ECO:0000256" key="2">
    <source>
        <dbReference type="SAM" id="MobiDB-lite"/>
    </source>
</evidence>
<evidence type="ECO:0000305" key="3"/>
<name>MUKE_YERPE</name>
<sequence>MPVKLAQALANTLFPALDSQLRAGRHIGIDELDNHAFLMDFQEQLEEFYARYNVELIRAPEGFFYLRPRSTTLIPRSVLSELDMMVGKILCYLYLSPERLAHEGIFSQQELYEELLSLADESKLLKFVNQRSTGSDLDKQKLQEKVRTSLNRLRRLGMIYFMGNDSTKFRITEAVFRFGADVRSGDDQREAQLRMIRDGEAMAVENSLSLHDESDDADVTMGNAADSVEDEQE</sequence>
<proteinExistence type="inferred from homology"/>
<feature type="chain" id="PRO_0000206808" description="Chromosome partition protein MukE">
    <location>
        <begin position="1"/>
        <end position="233"/>
    </location>
</feature>
<feature type="region of interest" description="Disordered" evidence="2">
    <location>
        <begin position="207"/>
        <end position="233"/>
    </location>
</feature>
<gene>
    <name evidence="1" type="primary">mukE</name>
    <name type="ordered locus">YPO1404</name>
    <name type="ordered locus">y2766</name>
    <name type="ordered locus">YP_1189</name>
</gene>
<organism>
    <name type="scientific">Yersinia pestis</name>
    <dbReference type="NCBI Taxonomy" id="632"/>
    <lineage>
        <taxon>Bacteria</taxon>
        <taxon>Pseudomonadati</taxon>
        <taxon>Pseudomonadota</taxon>
        <taxon>Gammaproteobacteria</taxon>
        <taxon>Enterobacterales</taxon>
        <taxon>Yersiniaceae</taxon>
        <taxon>Yersinia</taxon>
    </lineage>
</organism>
<protein>
    <recommendedName>
        <fullName evidence="1">Chromosome partition protein MukE</fullName>
    </recommendedName>
</protein>
<reference key="1">
    <citation type="journal article" date="2001" name="Nature">
        <title>Genome sequence of Yersinia pestis, the causative agent of plague.</title>
        <authorList>
            <person name="Parkhill J."/>
            <person name="Wren B.W."/>
            <person name="Thomson N.R."/>
            <person name="Titball R.W."/>
            <person name="Holden M.T.G."/>
            <person name="Prentice M.B."/>
            <person name="Sebaihia M."/>
            <person name="James K.D."/>
            <person name="Churcher C.M."/>
            <person name="Mungall K.L."/>
            <person name="Baker S."/>
            <person name="Basham D."/>
            <person name="Bentley S.D."/>
            <person name="Brooks K."/>
            <person name="Cerdeno-Tarraga A.-M."/>
            <person name="Chillingworth T."/>
            <person name="Cronin A."/>
            <person name="Davies R.M."/>
            <person name="Davis P."/>
            <person name="Dougan G."/>
            <person name="Feltwell T."/>
            <person name="Hamlin N."/>
            <person name="Holroyd S."/>
            <person name="Jagels K."/>
            <person name="Karlyshev A.V."/>
            <person name="Leather S."/>
            <person name="Moule S."/>
            <person name="Oyston P.C.F."/>
            <person name="Quail M.A."/>
            <person name="Rutherford K.M."/>
            <person name="Simmonds M."/>
            <person name="Skelton J."/>
            <person name="Stevens K."/>
            <person name="Whitehead S."/>
            <person name="Barrell B.G."/>
        </authorList>
    </citation>
    <scope>NUCLEOTIDE SEQUENCE [LARGE SCALE GENOMIC DNA]</scope>
    <source>
        <strain>CO-92 / Biovar Orientalis</strain>
    </source>
</reference>
<reference key="2">
    <citation type="journal article" date="2002" name="J. Bacteriol.">
        <title>Genome sequence of Yersinia pestis KIM.</title>
        <authorList>
            <person name="Deng W."/>
            <person name="Burland V."/>
            <person name="Plunkett G. III"/>
            <person name="Boutin A."/>
            <person name="Mayhew G.F."/>
            <person name="Liss P."/>
            <person name="Perna N.T."/>
            <person name="Rose D.J."/>
            <person name="Mau B."/>
            <person name="Zhou S."/>
            <person name="Schwartz D.C."/>
            <person name="Fetherston J.D."/>
            <person name="Lindler L.E."/>
            <person name="Brubaker R.R."/>
            <person name="Plano G.V."/>
            <person name="Straley S.C."/>
            <person name="McDonough K.A."/>
            <person name="Nilles M.L."/>
            <person name="Matson J.S."/>
            <person name="Blattner F.R."/>
            <person name="Perry R.D."/>
        </authorList>
    </citation>
    <scope>NUCLEOTIDE SEQUENCE [LARGE SCALE GENOMIC DNA]</scope>
    <source>
        <strain>KIM10+ / Biovar Mediaevalis</strain>
    </source>
</reference>
<reference key="3">
    <citation type="journal article" date="2004" name="DNA Res.">
        <title>Complete genome sequence of Yersinia pestis strain 91001, an isolate avirulent to humans.</title>
        <authorList>
            <person name="Song Y."/>
            <person name="Tong Z."/>
            <person name="Wang J."/>
            <person name="Wang L."/>
            <person name="Guo Z."/>
            <person name="Han Y."/>
            <person name="Zhang J."/>
            <person name="Pei D."/>
            <person name="Zhou D."/>
            <person name="Qin H."/>
            <person name="Pang X."/>
            <person name="Han Y."/>
            <person name="Zhai J."/>
            <person name="Li M."/>
            <person name="Cui B."/>
            <person name="Qi Z."/>
            <person name="Jin L."/>
            <person name="Dai R."/>
            <person name="Chen F."/>
            <person name="Li S."/>
            <person name="Ye C."/>
            <person name="Du Z."/>
            <person name="Lin W."/>
            <person name="Wang J."/>
            <person name="Yu J."/>
            <person name="Yang H."/>
            <person name="Wang J."/>
            <person name="Huang P."/>
            <person name="Yang R."/>
        </authorList>
    </citation>
    <scope>NUCLEOTIDE SEQUENCE [LARGE SCALE GENOMIC DNA]</scope>
    <source>
        <strain>91001 / Biovar Mediaevalis</strain>
    </source>
</reference>